<comment type="function">
    <text evidence="1">Catalyzes the GTP-dependent ribosomal translocation step during translation elongation. During this step, the ribosome changes from the pre-translocational (PRE) to the post-translocational (POST) state as the newly formed A-site-bound peptidyl-tRNA and P-site-bound deacylated tRNA move to the P and E sites, respectively. Catalyzes the coordinated movement of the two tRNA molecules, the mRNA and conformational changes in the ribosome.</text>
</comment>
<comment type="subcellular location">
    <subcellularLocation>
        <location evidence="1">Cytoplasm</location>
    </subcellularLocation>
</comment>
<comment type="similarity">
    <text evidence="1">Belongs to the TRAFAC class translation factor GTPase superfamily. Classic translation factor GTPase family. EF-G/EF-2 subfamily.</text>
</comment>
<proteinExistence type="inferred from homology"/>
<feature type="chain" id="PRO_0000263483" description="Elongation factor G">
    <location>
        <begin position="1"/>
        <end position="691"/>
    </location>
</feature>
<feature type="domain" description="tr-type G">
    <location>
        <begin position="8"/>
        <end position="282"/>
    </location>
</feature>
<feature type="binding site" evidence="1">
    <location>
        <begin position="17"/>
        <end position="24"/>
    </location>
    <ligand>
        <name>GTP</name>
        <dbReference type="ChEBI" id="CHEBI:37565"/>
    </ligand>
</feature>
<feature type="binding site" evidence="1">
    <location>
        <begin position="81"/>
        <end position="85"/>
    </location>
    <ligand>
        <name>GTP</name>
        <dbReference type="ChEBI" id="CHEBI:37565"/>
    </ligand>
</feature>
<feature type="binding site" evidence="1">
    <location>
        <begin position="135"/>
        <end position="138"/>
    </location>
    <ligand>
        <name>GTP</name>
        <dbReference type="ChEBI" id="CHEBI:37565"/>
    </ligand>
</feature>
<protein>
    <recommendedName>
        <fullName evidence="1">Elongation factor G</fullName>
        <shortName evidence="1">EF-G</shortName>
    </recommendedName>
</protein>
<name>EFG_PROM9</name>
<keyword id="KW-0963">Cytoplasm</keyword>
<keyword id="KW-0251">Elongation factor</keyword>
<keyword id="KW-0342">GTP-binding</keyword>
<keyword id="KW-0547">Nucleotide-binding</keyword>
<keyword id="KW-0648">Protein biosynthesis</keyword>
<organism>
    <name type="scientific">Prochlorococcus marinus (strain MIT 9312)</name>
    <dbReference type="NCBI Taxonomy" id="74546"/>
    <lineage>
        <taxon>Bacteria</taxon>
        <taxon>Bacillati</taxon>
        <taxon>Cyanobacteriota</taxon>
        <taxon>Cyanophyceae</taxon>
        <taxon>Synechococcales</taxon>
        <taxon>Prochlorococcaceae</taxon>
        <taxon>Prochlorococcus</taxon>
    </lineage>
</organism>
<evidence type="ECO:0000255" key="1">
    <source>
        <dbReference type="HAMAP-Rule" id="MF_00054"/>
    </source>
</evidence>
<reference key="1">
    <citation type="journal article" date="2006" name="Science">
        <title>Genomic islands and the ecology and evolution of Prochlorococcus.</title>
        <authorList>
            <person name="Coleman M.L."/>
            <person name="Sullivan M.B."/>
            <person name="Martiny A.C."/>
            <person name="Steglich C."/>
            <person name="Barry K."/>
            <person name="Delong E.F."/>
            <person name="Chisholm S.W."/>
        </authorList>
    </citation>
    <scope>NUCLEOTIDE SEQUENCE [LARGE SCALE GENOMIC DNA]</scope>
    <source>
        <strain>MIT 9312</strain>
    </source>
</reference>
<gene>
    <name evidence="1" type="primary">fusA</name>
    <name type="ordered locus">PMT9312_1601</name>
</gene>
<accession>Q318N4</accession>
<sequence>MARDFPLERVRNIGIAAHIDAGKTTTTERILFYSGVVHKIGEVHDGAAVTDWMAQERERGITITAAAISTSWQDHRINIIDTPGHVDFTIEVERSMRVLDGVIAVFCAVGGVQPQSETVWRQADRYSVPRMVFVNKMDRTGADFLKVNNQIKDRLKANALPIQLPIGAEGDLTGIIDLVANKAYLYKNDLGTDIQEAPIPSEMDDEAAEWRYKLMESVAENDEELIETFLETGELSEEQLKKGIREGVLKHGLVPVLCGSAFKNKGVQLVLDAVVDYLPAPVDVKPIQGVLPSGKEDVRPSDDNAPFSALAFKVMSDPYGKLTFVRMYSGVLSKGSYVMNSTKDAKERISRLVILKADEREEVDELRAGDLGAVLGLKNTTTGDTLCNTEDPIVLETLFIPEPVISVAVEPKTKGDMEKLSKALTALSEEDPTFRVSTDPETNQTVIAGMGELHLEILVDRMLREFKVEANIGAPQVSYRETIRSSSKGEGKYARQTGGKGQYGHVIIEMEPAEVGKGFEFVNKIVGGAVPKEYIGPASNGMKETCESGVLAGYPLIDVKVTLVDGSFHDVDSSEMAFKIAGSMAFKDGVKKCNPVLLEPMMKVEVESPDDFLGSVIGDLSSRRGQVEGQSVDDGLSKVQAKVPLAEMFGYATQLRSMTQGRGIFSMEFANYEEVPRNVAEAIITKNQGNS</sequence>
<dbReference type="EMBL" id="CP000111">
    <property type="protein sequence ID" value="ABB50661.1"/>
    <property type="molecule type" value="Genomic_DNA"/>
</dbReference>
<dbReference type="RefSeq" id="WP_011377143.1">
    <property type="nucleotide sequence ID" value="NC_007577.1"/>
</dbReference>
<dbReference type="SMR" id="Q318N4"/>
<dbReference type="STRING" id="74546.PMT9312_1601"/>
<dbReference type="KEGG" id="pmi:PMT9312_1601"/>
<dbReference type="eggNOG" id="COG0480">
    <property type="taxonomic scope" value="Bacteria"/>
</dbReference>
<dbReference type="HOGENOM" id="CLU_002794_4_1_3"/>
<dbReference type="OrthoDB" id="580826at2"/>
<dbReference type="Proteomes" id="UP000002715">
    <property type="component" value="Chromosome"/>
</dbReference>
<dbReference type="GO" id="GO:0005737">
    <property type="term" value="C:cytoplasm"/>
    <property type="evidence" value="ECO:0007669"/>
    <property type="project" value="UniProtKB-SubCell"/>
</dbReference>
<dbReference type="GO" id="GO:0005525">
    <property type="term" value="F:GTP binding"/>
    <property type="evidence" value="ECO:0007669"/>
    <property type="project" value="UniProtKB-UniRule"/>
</dbReference>
<dbReference type="GO" id="GO:0003924">
    <property type="term" value="F:GTPase activity"/>
    <property type="evidence" value="ECO:0007669"/>
    <property type="project" value="InterPro"/>
</dbReference>
<dbReference type="GO" id="GO:0003746">
    <property type="term" value="F:translation elongation factor activity"/>
    <property type="evidence" value="ECO:0007669"/>
    <property type="project" value="UniProtKB-UniRule"/>
</dbReference>
<dbReference type="GO" id="GO:0032790">
    <property type="term" value="P:ribosome disassembly"/>
    <property type="evidence" value="ECO:0007669"/>
    <property type="project" value="TreeGrafter"/>
</dbReference>
<dbReference type="CDD" id="cd01886">
    <property type="entry name" value="EF-G"/>
    <property type="match status" value="1"/>
</dbReference>
<dbReference type="CDD" id="cd16262">
    <property type="entry name" value="EFG_III"/>
    <property type="match status" value="1"/>
</dbReference>
<dbReference type="CDD" id="cd01434">
    <property type="entry name" value="EFG_mtEFG1_IV"/>
    <property type="match status" value="1"/>
</dbReference>
<dbReference type="CDD" id="cd03713">
    <property type="entry name" value="EFG_mtEFG_C"/>
    <property type="match status" value="1"/>
</dbReference>
<dbReference type="CDD" id="cd04088">
    <property type="entry name" value="EFG_mtEFG_II"/>
    <property type="match status" value="1"/>
</dbReference>
<dbReference type="FunFam" id="2.40.30.10:FF:000006">
    <property type="entry name" value="Elongation factor G"/>
    <property type="match status" value="1"/>
</dbReference>
<dbReference type="FunFam" id="3.30.230.10:FF:000003">
    <property type="entry name" value="Elongation factor G"/>
    <property type="match status" value="1"/>
</dbReference>
<dbReference type="FunFam" id="3.30.70.240:FF:000001">
    <property type="entry name" value="Elongation factor G"/>
    <property type="match status" value="1"/>
</dbReference>
<dbReference type="FunFam" id="3.30.70.870:FF:000001">
    <property type="entry name" value="Elongation factor G"/>
    <property type="match status" value="1"/>
</dbReference>
<dbReference type="FunFam" id="3.40.50.300:FF:000029">
    <property type="entry name" value="Elongation factor G"/>
    <property type="match status" value="1"/>
</dbReference>
<dbReference type="Gene3D" id="3.30.230.10">
    <property type="match status" value="1"/>
</dbReference>
<dbReference type="Gene3D" id="3.30.70.240">
    <property type="match status" value="1"/>
</dbReference>
<dbReference type="Gene3D" id="3.30.70.870">
    <property type="entry name" value="Elongation Factor G (Translational Gtpase), domain 3"/>
    <property type="match status" value="1"/>
</dbReference>
<dbReference type="Gene3D" id="3.40.50.300">
    <property type="entry name" value="P-loop containing nucleotide triphosphate hydrolases"/>
    <property type="match status" value="1"/>
</dbReference>
<dbReference type="Gene3D" id="2.40.30.10">
    <property type="entry name" value="Translation factors"/>
    <property type="match status" value="1"/>
</dbReference>
<dbReference type="HAMAP" id="MF_00054_B">
    <property type="entry name" value="EF_G_EF_2_B"/>
    <property type="match status" value="1"/>
</dbReference>
<dbReference type="InterPro" id="IPR041095">
    <property type="entry name" value="EFG_II"/>
</dbReference>
<dbReference type="InterPro" id="IPR009022">
    <property type="entry name" value="EFG_III"/>
</dbReference>
<dbReference type="InterPro" id="IPR035647">
    <property type="entry name" value="EFG_III/V"/>
</dbReference>
<dbReference type="InterPro" id="IPR047872">
    <property type="entry name" value="EFG_IV"/>
</dbReference>
<dbReference type="InterPro" id="IPR035649">
    <property type="entry name" value="EFG_V"/>
</dbReference>
<dbReference type="InterPro" id="IPR000640">
    <property type="entry name" value="EFG_V-like"/>
</dbReference>
<dbReference type="InterPro" id="IPR004161">
    <property type="entry name" value="EFTu-like_2"/>
</dbReference>
<dbReference type="InterPro" id="IPR031157">
    <property type="entry name" value="G_TR_CS"/>
</dbReference>
<dbReference type="InterPro" id="IPR027417">
    <property type="entry name" value="P-loop_NTPase"/>
</dbReference>
<dbReference type="InterPro" id="IPR020568">
    <property type="entry name" value="Ribosomal_Su5_D2-typ_SF"/>
</dbReference>
<dbReference type="InterPro" id="IPR014721">
    <property type="entry name" value="Ribsml_uS5_D2-typ_fold_subgr"/>
</dbReference>
<dbReference type="InterPro" id="IPR005225">
    <property type="entry name" value="Small_GTP-bd"/>
</dbReference>
<dbReference type="InterPro" id="IPR000795">
    <property type="entry name" value="T_Tr_GTP-bd_dom"/>
</dbReference>
<dbReference type="InterPro" id="IPR009000">
    <property type="entry name" value="Transl_B-barrel_sf"/>
</dbReference>
<dbReference type="InterPro" id="IPR004540">
    <property type="entry name" value="Transl_elong_EFG/EF2"/>
</dbReference>
<dbReference type="InterPro" id="IPR005517">
    <property type="entry name" value="Transl_elong_EFG/EF2_IV"/>
</dbReference>
<dbReference type="NCBIfam" id="TIGR00484">
    <property type="entry name" value="EF-G"/>
    <property type="match status" value="1"/>
</dbReference>
<dbReference type="NCBIfam" id="NF009379">
    <property type="entry name" value="PRK12740.1-3"/>
    <property type="match status" value="1"/>
</dbReference>
<dbReference type="NCBIfam" id="NF009381">
    <property type="entry name" value="PRK12740.1-5"/>
    <property type="match status" value="1"/>
</dbReference>
<dbReference type="NCBIfam" id="TIGR00231">
    <property type="entry name" value="small_GTP"/>
    <property type="match status" value="1"/>
</dbReference>
<dbReference type="PANTHER" id="PTHR43261:SF1">
    <property type="entry name" value="RIBOSOME-RELEASING FACTOR 2, MITOCHONDRIAL"/>
    <property type="match status" value="1"/>
</dbReference>
<dbReference type="PANTHER" id="PTHR43261">
    <property type="entry name" value="TRANSLATION ELONGATION FACTOR G-RELATED"/>
    <property type="match status" value="1"/>
</dbReference>
<dbReference type="Pfam" id="PF00679">
    <property type="entry name" value="EFG_C"/>
    <property type="match status" value="1"/>
</dbReference>
<dbReference type="Pfam" id="PF14492">
    <property type="entry name" value="EFG_III"/>
    <property type="match status" value="1"/>
</dbReference>
<dbReference type="Pfam" id="PF03764">
    <property type="entry name" value="EFG_IV"/>
    <property type="match status" value="1"/>
</dbReference>
<dbReference type="Pfam" id="PF00009">
    <property type="entry name" value="GTP_EFTU"/>
    <property type="match status" value="1"/>
</dbReference>
<dbReference type="Pfam" id="PF03144">
    <property type="entry name" value="GTP_EFTU_D2"/>
    <property type="match status" value="1"/>
</dbReference>
<dbReference type="PRINTS" id="PR00315">
    <property type="entry name" value="ELONGATNFCT"/>
</dbReference>
<dbReference type="SMART" id="SM00838">
    <property type="entry name" value="EFG_C"/>
    <property type="match status" value="1"/>
</dbReference>
<dbReference type="SMART" id="SM00889">
    <property type="entry name" value="EFG_IV"/>
    <property type="match status" value="1"/>
</dbReference>
<dbReference type="SUPFAM" id="SSF54980">
    <property type="entry name" value="EF-G C-terminal domain-like"/>
    <property type="match status" value="2"/>
</dbReference>
<dbReference type="SUPFAM" id="SSF52540">
    <property type="entry name" value="P-loop containing nucleoside triphosphate hydrolases"/>
    <property type="match status" value="1"/>
</dbReference>
<dbReference type="SUPFAM" id="SSF54211">
    <property type="entry name" value="Ribosomal protein S5 domain 2-like"/>
    <property type="match status" value="1"/>
</dbReference>
<dbReference type="SUPFAM" id="SSF50447">
    <property type="entry name" value="Translation proteins"/>
    <property type="match status" value="1"/>
</dbReference>
<dbReference type="PROSITE" id="PS00301">
    <property type="entry name" value="G_TR_1"/>
    <property type="match status" value="1"/>
</dbReference>
<dbReference type="PROSITE" id="PS51722">
    <property type="entry name" value="G_TR_2"/>
    <property type="match status" value="1"/>
</dbReference>